<keyword id="KW-0963">Cytoplasm</keyword>
<keyword id="KW-0285">Flavoprotein</keyword>
<keyword id="KW-0288">FMN</keyword>
<keyword id="KW-0413">Isomerase</keyword>
<keyword id="KW-0414">Isoprene biosynthesis</keyword>
<keyword id="KW-0460">Magnesium</keyword>
<keyword id="KW-0479">Metal-binding</keyword>
<keyword id="KW-0521">NADP</keyword>
<keyword id="KW-1185">Reference proteome</keyword>
<evidence type="ECO:0000255" key="1">
    <source>
        <dbReference type="HAMAP-Rule" id="MF_00354"/>
    </source>
</evidence>
<protein>
    <recommendedName>
        <fullName evidence="1">Isopentenyl-diphosphate delta-isomerase</fullName>
        <shortName evidence="1">IPP isomerase</shortName>
        <ecNumber evidence="1">5.3.3.2</ecNumber>
    </recommendedName>
    <alternativeName>
        <fullName evidence="1">Isopentenyl diphosphate:dimethylallyl diphosphate isomerase</fullName>
    </alternativeName>
    <alternativeName>
        <fullName evidence="1">Isopentenyl pyrophosphate isomerase</fullName>
    </alternativeName>
    <alternativeName>
        <fullName evidence="1">Type 2 isopentenyl diphosphate isomerase</fullName>
        <shortName evidence="1">IDI-2</shortName>
    </alternativeName>
</protein>
<feature type="chain" id="PRO_0000134453" description="Isopentenyl-diphosphate delta-isomerase">
    <location>
        <begin position="1"/>
        <end position="374"/>
    </location>
</feature>
<feature type="binding site" evidence="1">
    <location>
        <begin position="13"/>
        <end position="14"/>
    </location>
    <ligand>
        <name>substrate</name>
    </ligand>
</feature>
<feature type="binding site" evidence="1">
    <location>
        <begin position="71"/>
        <end position="73"/>
    </location>
    <ligand>
        <name>FMN</name>
        <dbReference type="ChEBI" id="CHEBI:58210"/>
    </ligand>
</feature>
<feature type="binding site" evidence="1">
    <location>
        <begin position="104"/>
        <end position="106"/>
    </location>
    <ligand>
        <name>substrate</name>
    </ligand>
</feature>
<feature type="binding site" evidence="1">
    <location>
        <position position="104"/>
    </location>
    <ligand>
        <name>FMN</name>
        <dbReference type="ChEBI" id="CHEBI:58210"/>
    </ligand>
</feature>
<feature type="binding site" evidence="1">
    <location>
        <position position="132"/>
    </location>
    <ligand>
        <name>FMN</name>
        <dbReference type="ChEBI" id="CHEBI:58210"/>
    </ligand>
</feature>
<feature type="binding site" evidence="1">
    <location>
        <position position="171"/>
    </location>
    <ligand>
        <name>substrate</name>
    </ligand>
</feature>
<feature type="binding site" evidence="1">
    <location>
        <position position="172"/>
    </location>
    <ligand>
        <name>Mg(2+)</name>
        <dbReference type="ChEBI" id="CHEBI:18420"/>
    </ligand>
</feature>
<feature type="binding site" evidence="1">
    <location>
        <position position="203"/>
    </location>
    <ligand>
        <name>FMN</name>
        <dbReference type="ChEBI" id="CHEBI:58210"/>
    </ligand>
</feature>
<feature type="binding site" evidence="1">
    <location>
        <position position="233"/>
    </location>
    <ligand>
        <name>FMN</name>
        <dbReference type="ChEBI" id="CHEBI:58210"/>
    </ligand>
</feature>
<feature type="binding site" evidence="1">
    <location>
        <begin position="282"/>
        <end position="284"/>
    </location>
    <ligand>
        <name>FMN</name>
        <dbReference type="ChEBI" id="CHEBI:58210"/>
    </ligand>
</feature>
<feature type="binding site" evidence="1">
    <location>
        <begin position="303"/>
        <end position="304"/>
    </location>
    <ligand>
        <name>FMN</name>
        <dbReference type="ChEBI" id="CHEBI:58210"/>
    </ligand>
</feature>
<gene>
    <name evidence="1" type="primary">fni</name>
    <name type="synonym">idiA</name>
    <name type="ordered locus">TK1470</name>
</gene>
<sequence>MGEFDREELTIIRKFEHIEHCLKRNVQAHVTNGFEDVHFVHMSLPEIDKDEIDLSVEFLGRKFDYPIFIAGMTGGTKGSQLAGRINKTLAKAAQELNIPMGVGSQRAMIRKPETWESYYVRDVAPDVFLVGNLGAPQFSETIRERYGLEEALKAVETIQADALAIHMNPLQESVQPEGDTQYRGVLKALAELKAEFPYPIIAKETGAGVSMEVAVRLESIGIDAIDVGGLGGTSWSGVEYYRAKDEIGKDLALRFWDWGIKTAISVAEVRYATELPIIATGGMRDGIAMAKALAMGATFAGVALPLLKPAVKGDVEGVIKILRRYIEEIRNAMFLVGARNVEELRKVPLVITGFTREWLEQRIDLPSYLRNRGI</sequence>
<proteinExistence type="inferred from homology"/>
<dbReference type="EC" id="5.3.3.2" evidence="1"/>
<dbReference type="EMBL" id="AB109220">
    <property type="protein sequence ID" value="BAD11790.1"/>
    <property type="molecule type" value="Genomic_DNA"/>
</dbReference>
<dbReference type="EMBL" id="AP006878">
    <property type="protein sequence ID" value="BAD85659.1"/>
    <property type="molecule type" value="Genomic_DNA"/>
</dbReference>
<dbReference type="RefSeq" id="WP_011250421.1">
    <property type="nucleotide sequence ID" value="NC_006624.1"/>
</dbReference>
<dbReference type="SMR" id="Q76CZ1"/>
<dbReference type="FunCoup" id="Q76CZ1">
    <property type="interactions" value="21"/>
</dbReference>
<dbReference type="IntAct" id="Q76CZ1">
    <property type="interactions" value="1"/>
</dbReference>
<dbReference type="MINT" id="Q76CZ1"/>
<dbReference type="STRING" id="69014.TK1470"/>
<dbReference type="EnsemblBacteria" id="BAD85659">
    <property type="protein sequence ID" value="BAD85659"/>
    <property type="gene ID" value="TK1470"/>
</dbReference>
<dbReference type="GeneID" id="78447992"/>
<dbReference type="KEGG" id="tko:TK1470"/>
<dbReference type="PATRIC" id="fig|69014.16.peg.1431"/>
<dbReference type="eggNOG" id="arCOG00613">
    <property type="taxonomic scope" value="Archaea"/>
</dbReference>
<dbReference type="HOGENOM" id="CLU_065515_1_0_2"/>
<dbReference type="InParanoid" id="Q76CZ1"/>
<dbReference type="OrthoDB" id="371955at2157"/>
<dbReference type="PhylomeDB" id="Q76CZ1"/>
<dbReference type="Proteomes" id="UP000000536">
    <property type="component" value="Chromosome"/>
</dbReference>
<dbReference type="GO" id="GO:0005737">
    <property type="term" value="C:cytoplasm"/>
    <property type="evidence" value="ECO:0007669"/>
    <property type="project" value="UniProtKB-SubCell"/>
</dbReference>
<dbReference type="GO" id="GO:0010181">
    <property type="term" value="F:FMN binding"/>
    <property type="evidence" value="ECO:0007669"/>
    <property type="project" value="UniProtKB-UniRule"/>
</dbReference>
<dbReference type="GO" id="GO:0004452">
    <property type="term" value="F:isopentenyl-diphosphate delta-isomerase activity"/>
    <property type="evidence" value="ECO:0007669"/>
    <property type="project" value="UniProtKB-UniRule"/>
</dbReference>
<dbReference type="GO" id="GO:0000287">
    <property type="term" value="F:magnesium ion binding"/>
    <property type="evidence" value="ECO:0007669"/>
    <property type="project" value="UniProtKB-UniRule"/>
</dbReference>
<dbReference type="GO" id="GO:0070402">
    <property type="term" value="F:NADPH binding"/>
    <property type="evidence" value="ECO:0007669"/>
    <property type="project" value="UniProtKB-UniRule"/>
</dbReference>
<dbReference type="GO" id="GO:0016491">
    <property type="term" value="F:oxidoreductase activity"/>
    <property type="evidence" value="ECO:0007669"/>
    <property type="project" value="InterPro"/>
</dbReference>
<dbReference type="GO" id="GO:0008299">
    <property type="term" value="P:isoprenoid biosynthetic process"/>
    <property type="evidence" value="ECO:0007669"/>
    <property type="project" value="UniProtKB-UniRule"/>
</dbReference>
<dbReference type="CDD" id="cd02811">
    <property type="entry name" value="IDI-2_FMN"/>
    <property type="match status" value="1"/>
</dbReference>
<dbReference type="Gene3D" id="3.20.20.70">
    <property type="entry name" value="Aldolase class I"/>
    <property type="match status" value="1"/>
</dbReference>
<dbReference type="HAMAP" id="MF_00354">
    <property type="entry name" value="Idi_2"/>
    <property type="match status" value="1"/>
</dbReference>
<dbReference type="InterPro" id="IPR013785">
    <property type="entry name" value="Aldolase_TIM"/>
</dbReference>
<dbReference type="InterPro" id="IPR000262">
    <property type="entry name" value="FMN-dep_DH"/>
</dbReference>
<dbReference type="InterPro" id="IPR011179">
    <property type="entry name" value="IPdP_isomerase"/>
</dbReference>
<dbReference type="NCBIfam" id="TIGR02151">
    <property type="entry name" value="IPP_isom_2"/>
    <property type="match status" value="1"/>
</dbReference>
<dbReference type="PANTHER" id="PTHR43665">
    <property type="entry name" value="ISOPENTENYL-DIPHOSPHATE DELTA-ISOMERASE"/>
    <property type="match status" value="1"/>
</dbReference>
<dbReference type="PANTHER" id="PTHR43665:SF1">
    <property type="entry name" value="ISOPENTENYL-DIPHOSPHATE DELTA-ISOMERASE"/>
    <property type="match status" value="1"/>
</dbReference>
<dbReference type="Pfam" id="PF01070">
    <property type="entry name" value="FMN_dh"/>
    <property type="match status" value="2"/>
</dbReference>
<dbReference type="PIRSF" id="PIRSF003314">
    <property type="entry name" value="IPP_isomerase"/>
    <property type="match status" value="1"/>
</dbReference>
<dbReference type="SMART" id="SM01240">
    <property type="entry name" value="IMPDH"/>
    <property type="match status" value="1"/>
</dbReference>
<dbReference type="SUPFAM" id="SSF51395">
    <property type="entry name" value="FMN-linked oxidoreductases"/>
    <property type="match status" value="1"/>
</dbReference>
<name>IDI2_THEKO</name>
<comment type="function">
    <text evidence="1">Involved in the biosynthesis of isoprenoids. Catalyzes the 1,3-allylic rearrangement of the homoallylic substrate isopentenyl (IPP) to its allylic isomer, dimethylallyl diphosphate (DMAPP).</text>
</comment>
<comment type="catalytic activity">
    <reaction evidence="1">
        <text>isopentenyl diphosphate = dimethylallyl diphosphate</text>
        <dbReference type="Rhea" id="RHEA:23284"/>
        <dbReference type="ChEBI" id="CHEBI:57623"/>
        <dbReference type="ChEBI" id="CHEBI:128769"/>
        <dbReference type="EC" id="5.3.3.2"/>
    </reaction>
</comment>
<comment type="cofactor">
    <cofactor evidence="1">
        <name>FMN</name>
        <dbReference type="ChEBI" id="CHEBI:58210"/>
    </cofactor>
</comment>
<comment type="cofactor">
    <cofactor evidence="1">
        <name>NADPH</name>
        <dbReference type="ChEBI" id="CHEBI:57783"/>
    </cofactor>
</comment>
<comment type="cofactor">
    <cofactor evidence="1">
        <name>Mg(2+)</name>
        <dbReference type="ChEBI" id="CHEBI:18420"/>
    </cofactor>
</comment>
<comment type="subunit">
    <text evidence="1">Homooctamer. Dimer of tetramers.</text>
</comment>
<comment type="subcellular location">
    <subcellularLocation>
        <location evidence="1">Cytoplasm</location>
    </subcellularLocation>
</comment>
<comment type="similarity">
    <text evidence="1">Belongs to the IPP isomerase type 2 family.</text>
</comment>
<accession>Q76CZ1</accession>
<organism>
    <name type="scientific">Thermococcus kodakarensis (strain ATCC BAA-918 / JCM 12380 / KOD1)</name>
    <name type="common">Pyrococcus kodakaraensis (strain KOD1)</name>
    <dbReference type="NCBI Taxonomy" id="69014"/>
    <lineage>
        <taxon>Archaea</taxon>
        <taxon>Methanobacteriati</taxon>
        <taxon>Methanobacteriota</taxon>
        <taxon>Thermococci</taxon>
        <taxon>Thermococcales</taxon>
        <taxon>Thermococcaceae</taxon>
        <taxon>Thermococcus</taxon>
    </lineage>
</organism>
<reference key="1">
    <citation type="journal article" date="2005" name="Biochem. Biophys. Res. Commun.">
        <title>Enzymatic and structural characterization of type II isopentenyl diphosphate isomerase from hyperthermophilic archaeon Thermococcus kodakaraensis.</title>
        <authorList>
            <person name="Siddiqui M.A."/>
            <person name="Yamanaka A."/>
            <person name="Hirooka K."/>
            <person name="Bamaba T."/>
            <person name="Kobayashi A."/>
            <person name="Imanaka T."/>
            <person name="Fukusaki E."/>
            <person name="Fujiwara S."/>
        </authorList>
    </citation>
    <scope>NUCLEOTIDE SEQUENCE [GENOMIC DNA]</scope>
    <source>
        <strain>ATCC BAA-918 / JCM 12380 / KOD1</strain>
    </source>
</reference>
<reference key="2">
    <citation type="journal article" date="2005" name="Genome Res.">
        <title>Complete genome sequence of the hyperthermophilic archaeon Thermococcus kodakaraensis KOD1 and comparison with Pyrococcus genomes.</title>
        <authorList>
            <person name="Fukui T."/>
            <person name="Atomi H."/>
            <person name="Kanai T."/>
            <person name="Matsumi R."/>
            <person name="Fujiwara S."/>
            <person name="Imanaka T."/>
        </authorList>
    </citation>
    <scope>NUCLEOTIDE SEQUENCE [LARGE SCALE GENOMIC DNA]</scope>
    <source>
        <strain>ATCC BAA-918 / JCM 12380 / KOD1</strain>
    </source>
</reference>